<name>KAD7_ARATH</name>
<comment type="function">
    <text evidence="1">Catalyzes the reversible transfer of the terminal phosphate group between ATP and AMP. Plays an important role in cellular energy homeostasis and in adenine nucleotide metabolism.</text>
</comment>
<comment type="catalytic activity">
    <reaction evidence="1">
        <text>AMP + ATP = 2 ADP</text>
        <dbReference type="Rhea" id="RHEA:12973"/>
        <dbReference type="ChEBI" id="CHEBI:30616"/>
        <dbReference type="ChEBI" id="CHEBI:456215"/>
        <dbReference type="ChEBI" id="CHEBI:456216"/>
        <dbReference type="EC" id="2.7.4.3"/>
    </reaction>
</comment>
<comment type="subunit">
    <text evidence="1">Monomer.</text>
</comment>
<comment type="subcellular location">
    <subcellularLocation>
        <location evidence="3">Mitochondrion</location>
    </subcellularLocation>
</comment>
<comment type="similarity">
    <text evidence="3">Belongs to the adenylate kinase family.</text>
</comment>
<comment type="sequence caution" evidence="3">
    <conflict type="erroneous gene model prediction">
        <sequence resource="EMBL-CDS" id="AAF03436"/>
    </conflict>
</comment>
<feature type="transit peptide" description="Mitochondrion" evidence="2">
    <location>
        <begin position="1"/>
        <end position="30"/>
    </location>
</feature>
<feature type="chain" id="PRO_0000430115" description="Probable adenylate kinase 7, mitochondrial">
    <location>
        <begin position="31"/>
        <end position="263"/>
    </location>
</feature>
<feature type="region of interest" description="NMP" evidence="1">
    <location>
        <begin position="92"/>
        <end position="121"/>
    </location>
</feature>
<feature type="binding site" evidence="1">
    <location>
        <begin position="72"/>
        <end position="77"/>
    </location>
    <ligand>
        <name>ATP</name>
        <dbReference type="ChEBI" id="CHEBI:30616"/>
    </ligand>
</feature>
<feature type="binding site" evidence="1">
    <location>
        <position position="98"/>
    </location>
    <ligand>
        <name>AMP</name>
        <dbReference type="ChEBI" id="CHEBI:456215"/>
    </ligand>
</feature>
<feature type="binding site" evidence="1">
    <location>
        <begin position="119"/>
        <end position="121"/>
    </location>
    <ligand>
        <name>AMP</name>
        <dbReference type="ChEBI" id="CHEBI:456215"/>
    </ligand>
</feature>
<feature type="binding site" evidence="1">
    <location>
        <begin position="149"/>
        <end position="152"/>
    </location>
    <ligand>
        <name>AMP</name>
        <dbReference type="ChEBI" id="CHEBI:456215"/>
    </ligand>
</feature>
<feature type="binding site" evidence="1">
    <location>
        <position position="156"/>
    </location>
    <ligand>
        <name>AMP</name>
        <dbReference type="ChEBI" id="CHEBI:456215"/>
    </ligand>
</feature>
<feature type="binding site" evidence="1">
    <location>
        <position position="206"/>
    </location>
    <ligand>
        <name>AMP</name>
        <dbReference type="ChEBI" id="CHEBI:456215"/>
    </ligand>
</feature>
<feature type="binding site" evidence="1">
    <location>
        <position position="234"/>
    </location>
    <ligand>
        <name>ATP</name>
        <dbReference type="ChEBI" id="CHEBI:30616"/>
    </ligand>
</feature>
<sequence length="263" mass="29455">MAWLSRVRGVSPVTRLAAIRRSFGSAAALEFDYDSDDEYLYGDDRRLAEPRLGLDGSGPDRGVQWVLMGAPGAWRHVFAERLSKLLEVPHISMGSLVRQELNPRSSLYKEIASAVNERKLVPKSVVFALLSKRLEEGYARGETGFILHGIPRTRFQAETLDQIAQIDLVVNLKCSEDHLVNRNETALPQQEFLGSMLHSPVAINARRESVGVYAQEVEEYYRKQRKLLDFHVGGATSADTWQGLLAALHLKQVNLTTSQKLTL</sequence>
<gene>
    <name type="ordered locus">At3g01820</name>
    <name type="ORF">F28J7.15</name>
</gene>
<protein>
    <recommendedName>
        <fullName>Probable adenylate kinase 7, mitochondrial</fullName>
        <ecNumber evidence="1">2.7.4.3</ecNumber>
    </recommendedName>
    <alternativeName>
        <fullName>ATP-AMP transphosphorylase 7</fullName>
    </alternativeName>
    <alternativeName>
        <fullName>ATP:AMP phosphotransferase</fullName>
    </alternativeName>
    <alternativeName>
        <fullName>Adenylate monophosphate kinase 7</fullName>
        <shortName>AMK7</shortName>
    </alternativeName>
</protein>
<proteinExistence type="evidence at transcript level"/>
<organism>
    <name type="scientific">Arabidopsis thaliana</name>
    <name type="common">Mouse-ear cress</name>
    <dbReference type="NCBI Taxonomy" id="3702"/>
    <lineage>
        <taxon>Eukaryota</taxon>
        <taxon>Viridiplantae</taxon>
        <taxon>Streptophyta</taxon>
        <taxon>Embryophyta</taxon>
        <taxon>Tracheophyta</taxon>
        <taxon>Spermatophyta</taxon>
        <taxon>Magnoliopsida</taxon>
        <taxon>eudicotyledons</taxon>
        <taxon>Gunneridae</taxon>
        <taxon>Pentapetalae</taxon>
        <taxon>rosids</taxon>
        <taxon>malvids</taxon>
        <taxon>Brassicales</taxon>
        <taxon>Brassicaceae</taxon>
        <taxon>Camelineae</taxon>
        <taxon>Arabidopsis</taxon>
    </lineage>
</organism>
<keyword id="KW-0067">ATP-binding</keyword>
<keyword id="KW-0418">Kinase</keyword>
<keyword id="KW-0496">Mitochondrion</keyword>
<keyword id="KW-0547">Nucleotide-binding</keyword>
<keyword id="KW-1185">Reference proteome</keyword>
<keyword id="KW-0808">Transferase</keyword>
<keyword id="KW-0809">Transit peptide</keyword>
<reference key="1">
    <citation type="journal article" date="2000" name="Nature">
        <title>Sequence and analysis of chromosome 3 of the plant Arabidopsis thaliana.</title>
        <authorList>
            <person name="Salanoubat M."/>
            <person name="Lemcke K."/>
            <person name="Rieger M."/>
            <person name="Ansorge W."/>
            <person name="Unseld M."/>
            <person name="Fartmann B."/>
            <person name="Valle G."/>
            <person name="Bloecker H."/>
            <person name="Perez-Alonso M."/>
            <person name="Obermaier B."/>
            <person name="Delseny M."/>
            <person name="Boutry M."/>
            <person name="Grivell L.A."/>
            <person name="Mache R."/>
            <person name="Puigdomenech P."/>
            <person name="De Simone V."/>
            <person name="Choisne N."/>
            <person name="Artiguenave F."/>
            <person name="Robert C."/>
            <person name="Brottier P."/>
            <person name="Wincker P."/>
            <person name="Cattolico L."/>
            <person name="Weissenbach J."/>
            <person name="Saurin W."/>
            <person name="Quetier F."/>
            <person name="Schaefer M."/>
            <person name="Mueller-Auer S."/>
            <person name="Gabel C."/>
            <person name="Fuchs M."/>
            <person name="Benes V."/>
            <person name="Wurmbach E."/>
            <person name="Drzonek H."/>
            <person name="Erfle H."/>
            <person name="Jordan N."/>
            <person name="Bangert S."/>
            <person name="Wiedelmann R."/>
            <person name="Kranz H."/>
            <person name="Voss H."/>
            <person name="Holland R."/>
            <person name="Brandt P."/>
            <person name="Nyakatura G."/>
            <person name="Vezzi A."/>
            <person name="D'Angelo M."/>
            <person name="Pallavicini A."/>
            <person name="Toppo S."/>
            <person name="Simionati B."/>
            <person name="Conrad A."/>
            <person name="Hornischer K."/>
            <person name="Kauer G."/>
            <person name="Loehnert T.-H."/>
            <person name="Nordsiek G."/>
            <person name="Reichelt J."/>
            <person name="Scharfe M."/>
            <person name="Schoen O."/>
            <person name="Bargues M."/>
            <person name="Terol J."/>
            <person name="Climent J."/>
            <person name="Navarro P."/>
            <person name="Collado C."/>
            <person name="Perez-Perez A."/>
            <person name="Ottenwaelder B."/>
            <person name="Duchemin D."/>
            <person name="Cooke R."/>
            <person name="Laudie M."/>
            <person name="Berger-Llauro C."/>
            <person name="Purnelle B."/>
            <person name="Masuy D."/>
            <person name="de Haan M."/>
            <person name="Maarse A.C."/>
            <person name="Alcaraz J.-P."/>
            <person name="Cottet A."/>
            <person name="Casacuberta E."/>
            <person name="Monfort A."/>
            <person name="Argiriou A."/>
            <person name="Flores M."/>
            <person name="Liguori R."/>
            <person name="Vitale D."/>
            <person name="Mannhaupt G."/>
            <person name="Haase D."/>
            <person name="Schoof H."/>
            <person name="Rudd S."/>
            <person name="Zaccaria P."/>
            <person name="Mewes H.-W."/>
            <person name="Mayer K.F.X."/>
            <person name="Kaul S."/>
            <person name="Town C.D."/>
            <person name="Koo H.L."/>
            <person name="Tallon L.J."/>
            <person name="Jenkins J."/>
            <person name="Rooney T."/>
            <person name="Rizzo M."/>
            <person name="Walts A."/>
            <person name="Utterback T."/>
            <person name="Fujii C.Y."/>
            <person name="Shea T.P."/>
            <person name="Creasy T.H."/>
            <person name="Haas B."/>
            <person name="Maiti R."/>
            <person name="Wu D."/>
            <person name="Peterson J."/>
            <person name="Van Aken S."/>
            <person name="Pai G."/>
            <person name="Militscher J."/>
            <person name="Sellers P."/>
            <person name="Gill J.E."/>
            <person name="Feldblyum T.V."/>
            <person name="Preuss D."/>
            <person name="Lin X."/>
            <person name="Nierman W.C."/>
            <person name="Salzberg S.L."/>
            <person name="White O."/>
            <person name="Venter J.C."/>
            <person name="Fraser C.M."/>
            <person name="Kaneko T."/>
            <person name="Nakamura Y."/>
            <person name="Sato S."/>
            <person name="Kato T."/>
            <person name="Asamizu E."/>
            <person name="Sasamoto S."/>
            <person name="Kimura T."/>
            <person name="Idesawa K."/>
            <person name="Kawashima K."/>
            <person name="Kishida Y."/>
            <person name="Kiyokawa C."/>
            <person name="Kohara M."/>
            <person name="Matsumoto M."/>
            <person name="Matsuno A."/>
            <person name="Muraki A."/>
            <person name="Nakayama S."/>
            <person name="Nakazaki N."/>
            <person name="Shinpo S."/>
            <person name="Takeuchi C."/>
            <person name="Wada T."/>
            <person name="Watanabe A."/>
            <person name="Yamada M."/>
            <person name="Yasuda M."/>
            <person name="Tabata S."/>
        </authorList>
    </citation>
    <scope>NUCLEOTIDE SEQUENCE [LARGE SCALE GENOMIC DNA]</scope>
    <source>
        <strain>cv. Columbia</strain>
    </source>
</reference>
<reference key="2">
    <citation type="journal article" date="2017" name="Plant J.">
        <title>Araport11: a complete reannotation of the Arabidopsis thaliana reference genome.</title>
        <authorList>
            <person name="Cheng C.Y."/>
            <person name="Krishnakumar V."/>
            <person name="Chan A.P."/>
            <person name="Thibaud-Nissen F."/>
            <person name="Schobel S."/>
            <person name="Town C.D."/>
        </authorList>
    </citation>
    <scope>GENOME REANNOTATION</scope>
    <source>
        <strain>cv. Columbia</strain>
    </source>
</reference>
<reference key="3">
    <citation type="journal article" date="2003" name="Science">
        <title>Empirical analysis of transcriptional activity in the Arabidopsis genome.</title>
        <authorList>
            <person name="Yamada K."/>
            <person name="Lim J."/>
            <person name="Dale J.M."/>
            <person name="Chen H."/>
            <person name="Shinn P."/>
            <person name="Palm C.J."/>
            <person name="Southwick A.M."/>
            <person name="Wu H.C."/>
            <person name="Kim C.J."/>
            <person name="Nguyen M."/>
            <person name="Pham P.K."/>
            <person name="Cheuk R.F."/>
            <person name="Karlin-Newmann G."/>
            <person name="Liu S.X."/>
            <person name="Lam B."/>
            <person name="Sakano H."/>
            <person name="Wu T."/>
            <person name="Yu G."/>
            <person name="Miranda M."/>
            <person name="Quach H.L."/>
            <person name="Tripp M."/>
            <person name="Chang C.H."/>
            <person name="Lee J.M."/>
            <person name="Toriumi M.J."/>
            <person name="Chan M.M."/>
            <person name="Tang C.C."/>
            <person name="Onodera C.S."/>
            <person name="Deng J.M."/>
            <person name="Akiyama K."/>
            <person name="Ansari Y."/>
            <person name="Arakawa T."/>
            <person name="Banh J."/>
            <person name="Banno F."/>
            <person name="Bowser L."/>
            <person name="Brooks S.Y."/>
            <person name="Carninci P."/>
            <person name="Chao Q."/>
            <person name="Choy N."/>
            <person name="Enju A."/>
            <person name="Goldsmith A.D."/>
            <person name="Gurjal M."/>
            <person name="Hansen N.F."/>
            <person name="Hayashizaki Y."/>
            <person name="Johnson-Hopson C."/>
            <person name="Hsuan V.W."/>
            <person name="Iida K."/>
            <person name="Karnes M."/>
            <person name="Khan S."/>
            <person name="Koesema E."/>
            <person name="Ishida J."/>
            <person name="Jiang P.X."/>
            <person name="Jones T."/>
            <person name="Kawai J."/>
            <person name="Kamiya A."/>
            <person name="Meyers C."/>
            <person name="Nakajima M."/>
            <person name="Narusaka M."/>
            <person name="Seki M."/>
            <person name="Sakurai T."/>
            <person name="Satou M."/>
            <person name="Tamse R."/>
            <person name="Vaysberg M."/>
            <person name="Wallender E.K."/>
            <person name="Wong C."/>
            <person name="Yamamura Y."/>
            <person name="Yuan S."/>
            <person name="Shinozaki K."/>
            <person name="Davis R.W."/>
            <person name="Theologis A."/>
            <person name="Ecker J.R."/>
        </authorList>
    </citation>
    <scope>NUCLEOTIDE SEQUENCE [LARGE SCALE MRNA]</scope>
    <source>
        <strain>cv. Columbia</strain>
    </source>
</reference>
<dbReference type="EC" id="2.7.4.3" evidence="1"/>
<dbReference type="EMBL" id="AC010797">
    <property type="protein sequence ID" value="AAF03436.1"/>
    <property type="status" value="ALT_SEQ"/>
    <property type="molecule type" value="Genomic_DNA"/>
</dbReference>
<dbReference type="EMBL" id="CP002686">
    <property type="protein sequence ID" value="AEE73720.1"/>
    <property type="molecule type" value="Genomic_DNA"/>
</dbReference>
<dbReference type="EMBL" id="AY125496">
    <property type="protein sequence ID" value="AAM78088.1"/>
    <property type="molecule type" value="mRNA"/>
</dbReference>
<dbReference type="EMBL" id="BT000536">
    <property type="protein sequence ID" value="AAN18105.1"/>
    <property type="molecule type" value="mRNA"/>
</dbReference>
<dbReference type="RefSeq" id="NP_186831.2">
    <property type="nucleotide sequence ID" value="NM_111048.4"/>
</dbReference>
<dbReference type="SMR" id="Q8L7W7"/>
<dbReference type="BioGRID" id="6404">
    <property type="interactions" value="2"/>
</dbReference>
<dbReference type="FunCoup" id="Q8L7W7">
    <property type="interactions" value="489"/>
</dbReference>
<dbReference type="IntAct" id="Q8L7W7">
    <property type="interactions" value="1"/>
</dbReference>
<dbReference type="STRING" id="3702.Q8L7W7"/>
<dbReference type="PaxDb" id="3702-AT3G01820.1"/>
<dbReference type="ProteomicsDB" id="232298"/>
<dbReference type="DNASU" id="821071"/>
<dbReference type="EnsemblPlants" id="AT3G01820.1">
    <property type="protein sequence ID" value="AT3G01820.1"/>
    <property type="gene ID" value="AT3G01820"/>
</dbReference>
<dbReference type="GeneID" id="821071"/>
<dbReference type="Gramene" id="AT3G01820.1">
    <property type="protein sequence ID" value="AT3G01820.1"/>
    <property type="gene ID" value="AT3G01820"/>
</dbReference>
<dbReference type="KEGG" id="ath:AT3G01820"/>
<dbReference type="Araport" id="AT3G01820"/>
<dbReference type="TAIR" id="AT3G01820"/>
<dbReference type="eggNOG" id="KOG3078">
    <property type="taxonomic scope" value="Eukaryota"/>
</dbReference>
<dbReference type="HOGENOM" id="CLU_032354_2_0_1"/>
<dbReference type="InParanoid" id="Q8L7W7"/>
<dbReference type="OMA" id="NPSAKKH"/>
<dbReference type="PhylomeDB" id="Q8L7W7"/>
<dbReference type="BioCyc" id="ARA:AT3G01820-MONOMER"/>
<dbReference type="PRO" id="PR:Q8L7W7"/>
<dbReference type="Proteomes" id="UP000006548">
    <property type="component" value="Chromosome 3"/>
</dbReference>
<dbReference type="ExpressionAtlas" id="Q8L7W7">
    <property type="expression patterns" value="baseline and differential"/>
</dbReference>
<dbReference type="GO" id="GO:0005739">
    <property type="term" value="C:mitochondrion"/>
    <property type="evidence" value="ECO:0007669"/>
    <property type="project" value="UniProtKB-SubCell"/>
</dbReference>
<dbReference type="GO" id="GO:0004017">
    <property type="term" value="F:adenylate kinase activity"/>
    <property type="evidence" value="ECO:0007669"/>
    <property type="project" value="UniProtKB-EC"/>
</dbReference>
<dbReference type="GO" id="GO:0005524">
    <property type="term" value="F:ATP binding"/>
    <property type="evidence" value="ECO:0007669"/>
    <property type="project" value="UniProtKB-KW"/>
</dbReference>
<dbReference type="CDD" id="cd01428">
    <property type="entry name" value="ADK"/>
    <property type="match status" value="1"/>
</dbReference>
<dbReference type="Gene3D" id="3.40.50.300">
    <property type="entry name" value="P-loop containing nucleotide triphosphate hydrolases"/>
    <property type="match status" value="1"/>
</dbReference>
<dbReference type="InterPro" id="IPR000850">
    <property type="entry name" value="Adenylat/UMP-CMP_kin"/>
</dbReference>
<dbReference type="InterPro" id="IPR027417">
    <property type="entry name" value="P-loop_NTPase"/>
</dbReference>
<dbReference type="PANTHER" id="PTHR23359">
    <property type="entry name" value="NUCLEOTIDE KINASE"/>
    <property type="match status" value="1"/>
</dbReference>
<dbReference type="Pfam" id="PF00406">
    <property type="entry name" value="ADK"/>
    <property type="match status" value="1"/>
</dbReference>
<dbReference type="PRINTS" id="PR00094">
    <property type="entry name" value="ADENYLTKNASE"/>
</dbReference>
<dbReference type="SUPFAM" id="SSF52540">
    <property type="entry name" value="P-loop containing nucleoside triphosphate hydrolases"/>
    <property type="match status" value="1"/>
</dbReference>
<accession>Q8L7W7</accession>
<accession>Q9SGI9</accession>
<evidence type="ECO:0000250" key="1">
    <source>
        <dbReference type="UniProtKB" id="P69441"/>
    </source>
</evidence>
<evidence type="ECO:0000255" key="2"/>
<evidence type="ECO:0000305" key="3"/>